<name>RNPA_THEFI</name>
<comment type="function">
    <text evidence="1">RNaseP catalyzes the removal of the 5'-leader sequence from pre-tRNA to produce the mature 5'-terminus. It can also cleave other RNA substrates such as 4.5S RNA. The protein component plays an auxiliary but essential role in vivo by binding to the 5'-leader sequence and broadening the substrate specificity of the ribozyme.</text>
</comment>
<comment type="catalytic activity">
    <reaction evidence="1">
        <text>Endonucleolytic cleavage of RNA, removing 5'-extranucleotides from tRNA precursor.</text>
        <dbReference type="EC" id="3.1.26.5"/>
    </reaction>
</comment>
<comment type="subunit">
    <text evidence="1">Consists of a catalytic RNA component (M1 or rnpB) and a protein subunit.</text>
</comment>
<comment type="miscellaneous">
    <text>The open reading frame (ORF) for this protein entirely encompasses the ORF for the 50S ribosomal protein L34 (rpmH). The two start codons are separated by four nucleotides.</text>
</comment>
<comment type="similarity">
    <text evidence="1">Belongs to the RnpA family.</text>
</comment>
<accession>Q7X5L2</accession>
<reference key="1">
    <citation type="journal article" date="2003" name="Proc. Natl. Acad. Sci. U.S.A.">
        <title>An unusual mechanism of bacterial gene expression revealed for the RNase P protein of Thermus strains.</title>
        <authorList>
            <person name="Feltens R."/>
            <person name="Gossringer M."/>
            <person name="Willkomm D.K."/>
            <person name="Urlaub H."/>
            <person name="Hartmann R.K."/>
        </authorList>
    </citation>
    <scope>NUCLEOTIDE SEQUENCE [GENOMIC DNA]</scope>
    <source>
        <strain>Tok4A2</strain>
    </source>
</reference>
<dbReference type="EC" id="3.1.26.5" evidence="1"/>
<dbReference type="EMBL" id="AY256339">
    <property type="protein sequence ID" value="AAO88971.1"/>
    <property type="molecule type" value="Genomic_DNA"/>
</dbReference>
<dbReference type="SMR" id="Q7X5L2"/>
<dbReference type="STRING" id="276.THFILI_01295"/>
<dbReference type="GO" id="GO:0030677">
    <property type="term" value="C:ribonuclease P complex"/>
    <property type="evidence" value="ECO:0007669"/>
    <property type="project" value="TreeGrafter"/>
</dbReference>
<dbReference type="GO" id="GO:0042781">
    <property type="term" value="F:3'-tRNA processing endoribonuclease activity"/>
    <property type="evidence" value="ECO:0007669"/>
    <property type="project" value="TreeGrafter"/>
</dbReference>
<dbReference type="GO" id="GO:0004526">
    <property type="term" value="F:ribonuclease P activity"/>
    <property type="evidence" value="ECO:0007669"/>
    <property type="project" value="UniProtKB-UniRule"/>
</dbReference>
<dbReference type="GO" id="GO:0000049">
    <property type="term" value="F:tRNA binding"/>
    <property type="evidence" value="ECO:0007669"/>
    <property type="project" value="UniProtKB-UniRule"/>
</dbReference>
<dbReference type="GO" id="GO:0001682">
    <property type="term" value="P:tRNA 5'-leader removal"/>
    <property type="evidence" value="ECO:0007669"/>
    <property type="project" value="UniProtKB-UniRule"/>
</dbReference>
<dbReference type="Gene3D" id="3.30.230.10">
    <property type="match status" value="1"/>
</dbReference>
<dbReference type="HAMAP" id="MF_00227">
    <property type="entry name" value="RNase_P"/>
    <property type="match status" value="1"/>
</dbReference>
<dbReference type="InterPro" id="IPR020568">
    <property type="entry name" value="Ribosomal_Su5_D2-typ_SF"/>
</dbReference>
<dbReference type="InterPro" id="IPR014721">
    <property type="entry name" value="Ribsml_uS5_D2-typ_fold_subgr"/>
</dbReference>
<dbReference type="InterPro" id="IPR000100">
    <property type="entry name" value="RNase_P"/>
</dbReference>
<dbReference type="InterPro" id="IPR020539">
    <property type="entry name" value="RNase_P_CS"/>
</dbReference>
<dbReference type="NCBIfam" id="TIGR00188">
    <property type="entry name" value="rnpA"/>
    <property type="match status" value="1"/>
</dbReference>
<dbReference type="PANTHER" id="PTHR33992">
    <property type="entry name" value="RIBONUCLEASE P PROTEIN COMPONENT"/>
    <property type="match status" value="1"/>
</dbReference>
<dbReference type="PANTHER" id="PTHR33992:SF1">
    <property type="entry name" value="RIBONUCLEASE P PROTEIN COMPONENT"/>
    <property type="match status" value="1"/>
</dbReference>
<dbReference type="Pfam" id="PF00825">
    <property type="entry name" value="Ribonuclease_P"/>
    <property type="match status" value="1"/>
</dbReference>
<dbReference type="SUPFAM" id="SSF54211">
    <property type="entry name" value="Ribosomal protein S5 domain 2-like"/>
    <property type="match status" value="1"/>
</dbReference>
<dbReference type="PROSITE" id="PS00648">
    <property type="entry name" value="RIBONUCLEASE_P"/>
    <property type="match status" value="1"/>
</dbReference>
<feature type="chain" id="PRO_0000198554" description="Ribonuclease P protein component">
    <location>
        <begin position="1"/>
        <end position="240"/>
    </location>
</feature>
<feature type="region of interest" description="Disordered" evidence="2">
    <location>
        <begin position="1"/>
        <end position="140"/>
    </location>
</feature>
<feature type="region of interest" description="Insert">
    <location>
        <begin position="47"/>
        <end position="123"/>
    </location>
</feature>
<feature type="compositionally biased region" description="Pro residues" evidence="2">
    <location>
        <begin position="40"/>
        <end position="51"/>
    </location>
</feature>
<feature type="compositionally biased region" description="Low complexity" evidence="2">
    <location>
        <begin position="122"/>
        <end position="132"/>
    </location>
</feature>
<keyword id="KW-0255">Endonuclease</keyword>
<keyword id="KW-0378">Hydrolase</keyword>
<keyword id="KW-0540">Nuclease</keyword>
<keyword id="KW-0694">RNA-binding</keyword>
<keyword id="KW-0819">tRNA processing</keyword>
<evidence type="ECO:0000255" key="1">
    <source>
        <dbReference type="HAMAP-Rule" id="MF_00227"/>
    </source>
</evidence>
<evidence type="ECO:0000256" key="2">
    <source>
        <dbReference type="SAM" id="MobiDB-lite"/>
    </source>
</evidence>
<protein>
    <recommendedName>
        <fullName evidence="1">Ribonuclease P protein component</fullName>
        <shortName evidence="1">RNase P protein</shortName>
        <shortName evidence="1">RNaseP protein</shortName>
        <ecNumber evidence="1">3.1.26.5</ecNumber>
    </recommendedName>
    <alternativeName>
        <fullName evidence="1">Protein C5</fullName>
    </alternativeName>
</protein>
<gene>
    <name evidence="1" type="primary">rnpA</name>
</gene>
<proteinExistence type="inferred from homology"/>
<sequence>MDEKDLATQQAQAGQDPRLPGPDEDQERAEGAEAQAAEGAPPPHRVIPPHPGLRQDGGPGKPPRPSLRWDGGPGKAFPKPADGATYAKEAAEKGMTPPQLGAGQAGGPGKPPHPGPDRDGGSKASRASSPKKAGGKGLVSLKGDRAFQRLKKGRSGRGRLVLVRWLPRQEGVAVGIVVSKKVGKAVVRNKVRRRIREILRRLHLPPADLLVIAQPEAKDAGFAELARDLFLALKKSGLVQ</sequence>
<organism>
    <name type="scientific">Thermus filiformis</name>
    <dbReference type="NCBI Taxonomy" id="276"/>
    <lineage>
        <taxon>Bacteria</taxon>
        <taxon>Thermotogati</taxon>
        <taxon>Deinococcota</taxon>
        <taxon>Deinococci</taxon>
        <taxon>Thermales</taxon>
        <taxon>Thermaceae</taxon>
        <taxon>Thermus</taxon>
    </lineage>
</organism>